<proteinExistence type="inferred from homology"/>
<dbReference type="EC" id="7.6.2.5" evidence="1"/>
<dbReference type="EMBL" id="CR628336">
    <property type="protein sequence ID" value="CAH12069.1"/>
    <property type="molecule type" value="Genomic_DNA"/>
</dbReference>
<dbReference type="RefSeq" id="WP_010946592.1">
    <property type="nucleotide sequence ID" value="NC_006368.1"/>
</dbReference>
<dbReference type="SMR" id="Q5X6P7"/>
<dbReference type="GeneID" id="57034844"/>
<dbReference type="KEGG" id="lpp:lpp0918"/>
<dbReference type="LegioList" id="lpp0918"/>
<dbReference type="HOGENOM" id="CLU_000604_1_2_6"/>
<dbReference type="GO" id="GO:0005886">
    <property type="term" value="C:plasma membrane"/>
    <property type="evidence" value="ECO:0007669"/>
    <property type="project" value="UniProtKB-SubCell"/>
</dbReference>
<dbReference type="GO" id="GO:0015439">
    <property type="term" value="F:ABC-type heme transporter activity"/>
    <property type="evidence" value="ECO:0007669"/>
    <property type="project" value="UniProtKB-EC"/>
</dbReference>
<dbReference type="GO" id="GO:0005524">
    <property type="term" value="F:ATP binding"/>
    <property type="evidence" value="ECO:0007669"/>
    <property type="project" value="UniProtKB-KW"/>
</dbReference>
<dbReference type="GO" id="GO:0016887">
    <property type="term" value="F:ATP hydrolysis activity"/>
    <property type="evidence" value="ECO:0007669"/>
    <property type="project" value="InterPro"/>
</dbReference>
<dbReference type="GO" id="GO:0017004">
    <property type="term" value="P:cytochrome complex assembly"/>
    <property type="evidence" value="ECO:0007669"/>
    <property type="project" value="UniProtKB-KW"/>
</dbReference>
<dbReference type="Gene3D" id="3.40.50.300">
    <property type="entry name" value="P-loop containing nucleotide triphosphate hydrolases"/>
    <property type="match status" value="1"/>
</dbReference>
<dbReference type="InterPro" id="IPR003593">
    <property type="entry name" value="AAA+_ATPase"/>
</dbReference>
<dbReference type="InterPro" id="IPR003439">
    <property type="entry name" value="ABC_transporter-like_ATP-bd"/>
</dbReference>
<dbReference type="InterPro" id="IPR005895">
    <property type="entry name" value="ABC_transptr_haem_export_CcmA"/>
</dbReference>
<dbReference type="InterPro" id="IPR027417">
    <property type="entry name" value="P-loop_NTPase"/>
</dbReference>
<dbReference type="NCBIfam" id="TIGR01189">
    <property type="entry name" value="ccmA"/>
    <property type="match status" value="1"/>
</dbReference>
<dbReference type="NCBIfam" id="NF010062">
    <property type="entry name" value="PRK13540.1"/>
    <property type="match status" value="1"/>
</dbReference>
<dbReference type="PANTHER" id="PTHR43499">
    <property type="entry name" value="ABC TRANSPORTER I FAMILY MEMBER 1"/>
    <property type="match status" value="1"/>
</dbReference>
<dbReference type="PANTHER" id="PTHR43499:SF1">
    <property type="entry name" value="ABC TRANSPORTER I FAMILY MEMBER 1"/>
    <property type="match status" value="1"/>
</dbReference>
<dbReference type="Pfam" id="PF00005">
    <property type="entry name" value="ABC_tran"/>
    <property type="match status" value="1"/>
</dbReference>
<dbReference type="SMART" id="SM00382">
    <property type="entry name" value="AAA"/>
    <property type="match status" value="1"/>
</dbReference>
<dbReference type="SUPFAM" id="SSF52540">
    <property type="entry name" value="P-loop containing nucleoside triphosphate hydrolases"/>
    <property type="match status" value="1"/>
</dbReference>
<dbReference type="PROSITE" id="PS50893">
    <property type="entry name" value="ABC_TRANSPORTER_2"/>
    <property type="match status" value="1"/>
</dbReference>
<dbReference type="PROSITE" id="PS51243">
    <property type="entry name" value="CCMA"/>
    <property type="match status" value="1"/>
</dbReference>
<name>CCMA_LEGPA</name>
<keyword id="KW-0067">ATP-binding</keyword>
<keyword id="KW-0997">Cell inner membrane</keyword>
<keyword id="KW-1003">Cell membrane</keyword>
<keyword id="KW-0201">Cytochrome c-type biogenesis</keyword>
<keyword id="KW-0472">Membrane</keyword>
<keyword id="KW-0547">Nucleotide-binding</keyword>
<keyword id="KW-1278">Translocase</keyword>
<keyword id="KW-0813">Transport</keyword>
<feature type="chain" id="PRO_0000092184" description="Cytochrome c biogenesis ATP-binding export protein CcmA">
    <location>
        <begin position="1"/>
        <end position="200"/>
    </location>
</feature>
<feature type="domain" description="ABC transporter" evidence="1">
    <location>
        <begin position="2"/>
        <end position="200"/>
    </location>
</feature>
<feature type="binding site" evidence="1">
    <location>
        <begin position="34"/>
        <end position="41"/>
    </location>
    <ligand>
        <name>ATP</name>
        <dbReference type="ChEBI" id="CHEBI:30616"/>
    </ligand>
</feature>
<evidence type="ECO:0000255" key="1">
    <source>
        <dbReference type="HAMAP-Rule" id="MF_01707"/>
    </source>
</evidence>
<protein>
    <recommendedName>
        <fullName evidence="1">Cytochrome c biogenesis ATP-binding export protein CcmA</fullName>
        <ecNumber evidence="1">7.6.2.5</ecNumber>
    </recommendedName>
    <alternativeName>
        <fullName evidence="1">Heme exporter protein A</fullName>
    </alternativeName>
</protein>
<gene>
    <name evidence="1" type="primary">ccmA</name>
    <name type="ordered locus">lpp0918</name>
</gene>
<accession>Q5X6P7</accession>
<reference key="1">
    <citation type="journal article" date="2004" name="Nat. Genet.">
        <title>Evidence in the Legionella pneumophila genome for exploitation of host cell functions and high genome plasticity.</title>
        <authorList>
            <person name="Cazalet C."/>
            <person name="Rusniok C."/>
            <person name="Brueggemann H."/>
            <person name="Zidane N."/>
            <person name="Magnier A."/>
            <person name="Ma L."/>
            <person name="Tichit M."/>
            <person name="Jarraud S."/>
            <person name="Bouchier C."/>
            <person name="Vandenesch F."/>
            <person name="Kunst F."/>
            <person name="Etienne J."/>
            <person name="Glaser P."/>
            <person name="Buchrieser C."/>
        </authorList>
    </citation>
    <scope>NUCLEOTIDE SEQUENCE [LARGE SCALE GENOMIC DNA]</scope>
    <source>
        <strain>Paris</strain>
    </source>
</reference>
<sequence length="200" mass="22557">MLDVIELDFDYHDQPLLQQISFHLPAGGLLHLKGSNGAGKTTLLKLIAGLLNPEKGEILFERQSIKKDLCTYQKQLCFVGHRSGINPYLTLRENCLYDIHFSPGAVGITELCRLFSLEHLIDYPCGLLSSGQKRQVALLRLWMSKAKLWLLDEPLVALDELSLLTIITKIQEHRAKGGAVLLTSHQDLPLNKADYEEYHL</sequence>
<organism>
    <name type="scientific">Legionella pneumophila (strain Paris)</name>
    <dbReference type="NCBI Taxonomy" id="297246"/>
    <lineage>
        <taxon>Bacteria</taxon>
        <taxon>Pseudomonadati</taxon>
        <taxon>Pseudomonadota</taxon>
        <taxon>Gammaproteobacteria</taxon>
        <taxon>Legionellales</taxon>
        <taxon>Legionellaceae</taxon>
        <taxon>Legionella</taxon>
    </lineage>
</organism>
<comment type="function">
    <text evidence="1">Part of the ABC transporter complex CcmAB involved in the biogenesis of c-type cytochromes; once thought to export heme, this seems not to be the case, but its exact role is uncertain. Responsible for energy coupling to the transport system.</text>
</comment>
<comment type="catalytic activity">
    <reaction evidence="1">
        <text>heme b(in) + ATP + H2O = heme b(out) + ADP + phosphate + H(+)</text>
        <dbReference type="Rhea" id="RHEA:19261"/>
        <dbReference type="ChEBI" id="CHEBI:15377"/>
        <dbReference type="ChEBI" id="CHEBI:15378"/>
        <dbReference type="ChEBI" id="CHEBI:30616"/>
        <dbReference type="ChEBI" id="CHEBI:43474"/>
        <dbReference type="ChEBI" id="CHEBI:60344"/>
        <dbReference type="ChEBI" id="CHEBI:456216"/>
        <dbReference type="EC" id="7.6.2.5"/>
    </reaction>
</comment>
<comment type="subunit">
    <text evidence="1">The complex is composed of two ATP-binding proteins (CcmA) and two transmembrane proteins (CcmB).</text>
</comment>
<comment type="subcellular location">
    <subcellularLocation>
        <location evidence="1">Cell inner membrane</location>
        <topology evidence="1">Peripheral membrane protein</topology>
    </subcellularLocation>
</comment>
<comment type="similarity">
    <text evidence="1">Belongs to the ABC transporter superfamily. CcmA exporter (TC 3.A.1.107) family.</text>
</comment>